<sequence length="146" mass="16647">MLKKNKDELNDLEYLVTQENGTEPPFQNEYWNHFEKGIYVDKLSGKPLFTSEEKFESDCGWPSFSKALSDDEVVELVDKSFGMVRTEVRSEDSNSHLGHVFNDGPAETGGLRYCINSAAVQFIPYDKLEELGYGDLIPHFKDQGEK</sequence>
<evidence type="ECO:0000255" key="1">
    <source>
        <dbReference type="HAMAP-Rule" id="MF_01400"/>
    </source>
</evidence>
<evidence type="ECO:0000255" key="2">
    <source>
        <dbReference type="PROSITE-ProRule" id="PRU01126"/>
    </source>
</evidence>
<organism>
    <name type="scientific">Staphylococcus carnosus (strain TM300)</name>
    <dbReference type="NCBI Taxonomy" id="396513"/>
    <lineage>
        <taxon>Bacteria</taxon>
        <taxon>Bacillati</taxon>
        <taxon>Bacillota</taxon>
        <taxon>Bacilli</taxon>
        <taxon>Bacillales</taxon>
        <taxon>Staphylococcaceae</taxon>
        <taxon>Staphylococcus</taxon>
    </lineage>
</organism>
<gene>
    <name evidence="1" type="primary">msrB</name>
    <name type="ordered locus">Sca_1067</name>
</gene>
<name>MSRB_STACT</name>
<accession>B9DNY9</accession>
<feature type="chain" id="PRO_1000184553" description="Peptide methionine sulfoxide reductase MsrB">
    <location>
        <begin position="1"/>
        <end position="146"/>
    </location>
</feature>
<feature type="domain" description="MsrB" evidence="2">
    <location>
        <begin position="2"/>
        <end position="125"/>
    </location>
</feature>
<feature type="active site" description="Nucleophile" evidence="2">
    <location>
        <position position="114"/>
    </location>
</feature>
<protein>
    <recommendedName>
        <fullName evidence="1">Peptide methionine sulfoxide reductase MsrB</fullName>
        <ecNumber evidence="1">1.8.4.12</ecNumber>
    </recommendedName>
    <alternativeName>
        <fullName evidence="1">Peptide-methionine (R)-S-oxide reductase</fullName>
    </alternativeName>
</protein>
<dbReference type="EC" id="1.8.4.12" evidence="1"/>
<dbReference type="EMBL" id="AM295250">
    <property type="protein sequence ID" value="CAL27975.1"/>
    <property type="molecule type" value="Genomic_DNA"/>
</dbReference>
<dbReference type="RefSeq" id="WP_015900316.1">
    <property type="nucleotide sequence ID" value="NC_012121.1"/>
</dbReference>
<dbReference type="SMR" id="B9DNY9"/>
<dbReference type="GeneID" id="93793491"/>
<dbReference type="KEGG" id="sca:SCA_1067"/>
<dbReference type="eggNOG" id="COG0229">
    <property type="taxonomic scope" value="Bacteria"/>
</dbReference>
<dbReference type="HOGENOM" id="CLU_031040_8_5_9"/>
<dbReference type="OrthoDB" id="4174719at2"/>
<dbReference type="BioCyc" id="SCAR396513:SCA_RS05345-MONOMER"/>
<dbReference type="Proteomes" id="UP000000444">
    <property type="component" value="Chromosome"/>
</dbReference>
<dbReference type="GO" id="GO:0005737">
    <property type="term" value="C:cytoplasm"/>
    <property type="evidence" value="ECO:0007669"/>
    <property type="project" value="TreeGrafter"/>
</dbReference>
<dbReference type="GO" id="GO:0033743">
    <property type="term" value="F:peptide-methionine (R)-S-oxide reductase activity"/>
    <property type="evidence" value="ECO:0007669"/>
    <property type="project" value="UniProtKB-UniRule"/>
</dbReference>
<dbReference type="GO" id="GO:0030091">
    <property type="term" value="P:protein repair"/>
    <property type="evidence" value="ECO:0007669"/>
    <property type="project" value="InterPro"/>
</dbReference>
<dbReference type="GO" id="GO:0006979">
    <property type="term" value="P:response to oxidative stress"/>
    <property type="evidence" value="ECO:0007669"/>
    <property type="project" value="InterPro"/>
</dbReference>
<dbReference type="FunFam" id="2.170.150.20:FF:000003">
    <property type="entry name" value="Peptide methionine sulfoxide reductase MsrB"/>
    <property type="match status" value="1"/>
</dbReference>
<dbReference type="Gene3D" id="2.170.150.20">
    <property type="entry name" value="Peptide methionine sulfoxide reductase"/>
    <property type="match status" value="1"/>
</dbReference>
<dbReference type="HAMAP" id="MF_01400">
    <property type="entry name" value="MsrB"/>
    <property type="match status" value="1"/>
</dbReference>
<dbReference type="InterPro" id="IPR028427">
    <property type="entry name" value="Met_Sox_Rdtase_MsrB"/>
</dbReference>
<dbReference type="InterPro" id="IPR002579">
    <property type="entry name" value="Met_Sox_Rdtase_MsrB_dom"/>
</dbReference>
<dbReference type="InterPro" id="IPR011057">
    <property type="entry name" value="Mss4-like_sf"/>
</dbReference>
<dbReference type="NCBIfam" id="TIGR00357">
    <property type="entry name" value="peptide-methionine (R)-S-oxide reductase MsrB"/>
    <property type="match status" value="1"/>
</dbReference>
<dbReference type="PANTHER" id="PTHR10173">
    <property type="entry name" value="METHIONINE SULFOXIDE REDUCTASE"/>
    <property type="match status" value="1"/>
</dbReference>
<dbReference type="PANTHER" id="PTHR10173:SF59">
    <property type="entry name" value="PEPTIDE METHIONINE SULFOXIDE REDUCTASE MSRA_MSRB"/>
    <property type="match status" value="1"/>
</dbReference>
<dbReference type="Pfam" id="PF01641">
    <property type="entry name" value="SelR"/>
    <property type="match status" value="1"/>
</dbReference>
<dbReference type="SUPFAM" id="SSF51316">
    <property type="entry name" value="Mss4-like"/>
    <property type="match status" value="1"/>
</dbReference>
<dbReference type="PROSITE" id="PS51790">
    <property type="entry name" value="MSRB"/>
    <property type="match status" value="1"/>
</dbReference>
<comment type="catalytic activity">
    <reaction evidence="1">
        <text>L-methionyl-[protein] + [thioredoxin]-disulfide + H2O = L-methionyl-(R)-S-oxide-[protein] + [thioredoxin]-dithiol</text>
        <dbReference type="Rhea" id="RHEA:24164"/>
        <dbReference type="Rhea" id="RHEA-COMP:10698"/>
        <dbReference type="Rhea" id="RHEA-COMP:10700"/>
        <dbReference type="Rhea" id="RHEA-COMP:12313"/>
        <dbReference type="Rhea" id="RHEA-COMP:12314"/>
        <dbReference type="ChEBI" id="CHEBI:15377"/>
        <dbReference type="ChEBI" id="CHEBI:16044"/>
        <dbReference type="ChEBI" id="CHEBI:29950"/>
        <dbReference type="ChEBI" id="CHEBI:45764"/>
        <dbReference type="ChEBI" id="CHEBI:50058"/>
        <dbReference type="EC" id="1.8.4.12"/>
    </reaction>
</comment>
<comment type="similarity">
    <text evidence="1">Belongs to the MsrB Met sulfoxide reductase family.</text>
</comment>
<proteinExistence type="inferred from homology"/>
<reference key="1">
    <citation type="journal article" date="2009" name="Appl. Environ. Microbiol.">
        <title>Genome analysis of the meat starter culture bacterium Staphylococcus carnosus TM300.</title>
        <authorList>
            <person name="Rosenstein R."/>
            <person name="Nerz C."/>
            <person name="Biswas L."/>
            <person name="Resch A."/>
            <person name="Raddatz G."/>
            <person name="Schuster S.C."/>
            <person name="Goetz F."/>
        </authorList>
    </citation>
    <scope>NUCLEOTIDE SEQUENCE [LARGE SCALE GENOMIC DNA]</scope>
    <source>
        <strain>TM300</strain>
    </source>
</reference>
<keyword id="KW-0560">Oxidoreductase</keyword>
<keyword id="KW-1185">Reference proteome</keyword>